<organism>
    <name type="scientific">Thiobacillus denitrificans (strain ATCC 25259 / T1)</name>
    <dbReference type="NCBI Taxonomy" id="292415"/>
    <lineage>
        <taxon>Bacteria</taxon>
        <taxon>Pseudomonadati</taxon>
        <taxon>Pseudomonadota</taxon>
        <taxon>Betaproteobacteria</taxon>
        <taxon>Nitrosomonadales</taxon>
        <taxon>Thiobacillaceae</taxon>
        <taxon>Thiobacillus</taxon>
    </lineage>
</organism>
<dbReference type="EC" id="4.1.99.17" evidence="1"/>
<dbReference type="EMBL" id="CP000116">
    <property type="protein sequence ID" value="AAZ98647.1"/>
    <property type="molecule type" value="Genomic_DNA"/>
</dbReference>
<dbReference type="RefSeq" id="WP_011313206.1">
    <property type="nucleotide sequence ID" value="NC_007404.1"/>
</dbReference>
<dbReference type="SMR" id="Q3SFG3"/>
<dbReference type="STRING" id="292415.Tbd_2694"/>
<dbReference type="KEGG" id="tbd:Tbd_2694"/>
<dbReference type="eggNOG" id="COG0422">
    <property type="taxonomic scope" value="Bacteria"/>
</dbReference>
<dbReference type="HOGENOM" id="CLU_013181_2_1_4"/>
<dbReference type="OrthoDB" id="9805897at2"/>
<dbReference type="UniPathway" id="UPA00060"/>
<dbReference type="Proteomes" id="UP000008291">
    <property type="component" value="Chromosome"/>
</dbReference>
<dbReference type="GO" id="GO:0005829">
    <property type="term" value="C:cytosol"/>
    <property type="evidence" value="ECO:0007669"/>
    <property type="project" value="TreeGrafter"/>
</dbReference>
<dbReference type="GO" id="GO:0051539">
    <property type="term" value="F:4 iron, 4 sulfur cluster binding"/>
    <property type="evidence" value="ECO:0007669"/>
    <property type="project" value="UniProtKB-KW"/>
</dbReference>
<dbReference type="GO" id="GO:0016830">
    <property type="term" value="F:carbon-carbon lyase activity"/>
    <property type="evidence" value="ECO:0007669"/>
    <property type="project" value="InterPro"/>
</dbReference>
<dbReference type="GO" id="GO:0008270">
    <property type="term" value="F:zinc ion binding"/>
    <property type="evidence" value="ECO:0007669"/>
    <property type="project" value="UniProtKB-UniRule"/>
</dbReference>
<dbReference type="GO" id="GO:0009228">
    <property type="term" value="P:thiamine biosynthetic process"/>
    <property type="evidence" value="ECO:0007669"/>
    <property type="project" value="UniProtKB-KW"/>
</dbReference>
<dbReference type="GO" id="GO:0009229">
    <property type="term" value="P:thiamine diphosphate biosynthetic process"/>
    <property type="evidence" value="ECO:0007669"/>
    <property type="project" value="UniProtKB-UniRule"/>
</dbReference>
<dbReference type="FunFam" id="3.20.20.540:FF:000001">
    <property type="entry name" value="Phosphomethylpyrimidine synthase"/>
    <property type="match status" value="1"/>
</dbReference>
<dbReference type="Gene3D" id="6.10.250.620">
    <property type="match status" value="1"/>
</dbReference>
<dbReference type="Gene3D" id="3.20.20.540">
    <property type="entry name" value="Radical SAM ThiC family, central domain"/>
    <property type="match status" value="1"/>
</dbReference>
<dbReference type="HAMAP" id="MF_00089">
    <property type="entry name" value="ThiC"/>
    <property type="match status" value="1"/>
</dbReference>
<dbReference type="InterPro" id="IPR037509">
    <property type="entry name" value="ThiC"/>
</dbReference>
<dbReference type="InterPro" id="IPR025747">
    <property type="entry name" value="ThiC-associated_dom"/>
</dbReference>
<dbReference type="InterPro" id="IPR038521">
    <property type="entry name" value="ThiC/Bza_core_dom"/>
</dbReference>
<dbReference type="InterPro" id="IPR002817">
    <property type="entry name" value="ThiC/BzaA/B"/>
</dbReference>
<dbReference type="NCBIfam" id="NF006763">
    <property type="entry name" value="PRK09284.1"/>
    <property type="match status" value="1"/>
</dbReference>
<dbReference type="NCBIfam" id="NF009895">
    <property type="entry name" value="PRK13352.1"/>
    <property type="match status" value="1"/>
</dbReference>
<dbReference type="NCBIfam" id="TIGR00190">
    <property type="entry name" value="thiC"/>
    <property type="match status" value="1"/>
</dbReference>
<dbReference type="PANTHER" id="PTHR30557:SF1">
    <property type="entry name" value="PHOSPHOMETHYLPYRIMIDINE SYNTHASE, CHLOROPLASTIC"/>
    <property type="match status" value="1"/>
</dbReference>
<dbReference type="PANTHER" id="PTHR30557">
    <property type="entry name" value="THIAMINE BIOSYNTHESIS PROTEIN THIC"/>
    <property type="match status" value="1"/>
</dbReference>
<dbReference type="Pfam" id="PF13667">
    <property type="entry name" value="ThiC-associated"/>
    <property type="match status" value="1"/>
</dbReference>
<dbReference type="Pfam" id="PF01964">
    <property type="entry name" value="ThiC_Rad_SAM"/>
    <property type="match status" value="1"/>
</dbReference>
<dbReference type="SFLD" id="SFLDF00407">
    <property type="entry name" value="phosphomethylpyrimidine_syntha"/>
    <property type="match status" value="1"/>
</dbReference>
<dbReference type="SFLD" id="SFLDG01114">
    <property type="entry name" value="phosphomethylpyrimidine_syntha"/>
    <property type="match status" value="1"/>
</dbReference>
<dbReference type="SFLD" id="SFLDS00113">
    <property type="entry name" value="Radical_SAM_Phosphomethylpyrim"/>
    <property type="match status" value="1"/>
</dbReference>
<name>THIC_THIDA</name>
<keyword id="KW-0004">4Fe-4S</keyword>
<keyword id="KW-0408">Iron</keyword>
<keyword id="KW-0411">Iron-sulfur</keyword>
<keyword id="KW-0456">Lyase</keyword>
<keyword id="KW-0479">Metal-binding</keyword>
<keyword id="KW-1185">Reference proteome</keyword>
<keyword id="KW-0949">S-adenosyl-L-methionine</keyword>
<keyword id="KW-0784">Thiamine biosynthesis</keyword>
<keyword id="KW-0862">Zinc</keyword>
<comment type="function">
    <text evidence="1">Catalyzes the synthesis of the hydroxymethylpyrimidine phosphate (HMP-P) moiety of thiamine from aminoimidazole ribotide (AIR) in a radical S-adenosyl-L-methionine (SAM)-dependent reaction.</text>
</comment>
<comment type="catalytic activity">
    <reaction evidence="1">
        <text>5-amino-1-(5-phospho-beta-D-ribosyl)imidazole + S-adenosyl-L-methionine = 4-amino-2-methyl-5-(phosphooxymethyl)pyrimidine + CO + 5'-deoxyadenosine + formate + L-methionine + 3 H(+)</text>
        <dbReference type="Rhea" id="RHEA:24840"/>
        <dbReference type="ChEBI" id="CHEBI:15378"/>
        <dbReference type="ChEBI" id="CHEBI:15740"/>
        <dbReference type="ChEBI" id="CHEBI:17245"/>
        <dbReference type="ChEBI" id="CHEBI:17319"/>
        <dbReference type="ChEBI" id="CHEBI:57844"/>
        <dbReference type="ChEBI" id="CHEBI:58354"/>
        <dbReference type="ChEBI" id="CHEBI:59789"/>
        <dbReference type="ChEBI" id="CHEBI:137981"/>
        <dbReference type="EC" id="4.1.99.17"/>
    </reaction>
</comment>
<comment type="cofactor">
    <cofactor evidence="1">
        <name>[4Fe-4S] cluster</name>
        <dbReference type="ChEBI" id="CHEBI:49883"/>
    </cofactor>
    <text evidence="1">Binds 1 [4Fe-4S] cluster per subunit. The cluster is coordinated with 3 cysteines and an exchangeable S-adenosyl-L-methionine.</text>
</comment>
<comment type="pathway">
    <text evidence="1">Cofactor biosynthesis; thiamine diphosphate biosynthesis.</text>
</comment>
<comment type="subunit">
    <text evidence="1">Homodimer.</text>
</comment>
<comment type="similarity">
    <text evidence="1">Belongs to the ThiC family.</text>
</comment>
<reference key="1">
    <citation type="journal article" date="2006" name="J. Bacteriol.">
        <title>The genome sequence of the obligately chemolithoautotrophic, facultatively anaerobic bacterium Thiobacillus denitrificans.</title>
        <authorList>
            <person name="Beller H.R."/>
            <person name="Chain P.S."/>
            <person name="Letain T.E."/>
            <person name="Chakicherla A."/>
            <person name="Larimer F.W."/>
            <person name="Richardson P.M."/>
            <person name="Coleman M.A."/>
            <person name="Wood A.P."/>
            <person name="Kelly D.P."/>
        </authorList>
    </citation>
    <scope>NUCLEOTIDE SEQUENCE [LARGE SCALE GENOMIC DNA]</scope>
    <source>
        <strain>ATCC 25259 / T1</strain>
    </source>
</reference>
<protein>
    <recommendedName>
        <fullName evidence="1">Phosphomethylpyrimidine synthase</fullName>
        <ecNumber evidence="1">4.1.99.17</ecNumber>
    </recommendedName>
    <alternativeName>
        <fullName evidence="1">Hydroxymethylpyrimidine phosphate synthase</fullName>
        <shortName evidence="1">HMP-P synthase</shortName>
        <shortName evidence="1">HMP-phosphate synthase</shortName>
        <shortName evidence="1">HMPP synthase</shortName>
    </alternativeName>
    <alternativeName>
        <fullName evidence="1">Thiamine biosynthesis protein ThiC</fullName>
    </alternativeName>
</protein>
<accession>Q3SFG3</accession>
<proteinExistence type="inferred from homology"/>
<sequence length="652" mass="72258">MNAAIPNQAAKFLAATAHVDEAAVQPLPNSRKIYVEGSTPDIRVPMREIRQADTPLMFSGEAGTGAERSEPNPPIFVYDCSGPYTDPAAKIDIREGLPALRTKWIEARGDTEVLRDLSSEYGRQQAANPELATMRFPGLHRHPRRAKAGMNVTQMHYARQGIITPEMEFIAIRENNNRAAYLESLRASGPQGAKLAALMSRQHPGQNFGANLQGEITPEFVRDEVARGRAIIPNNINHPESEPMIIGRNFLVKINANIGNSALGSSIQEEVEKMTWAIRWGGDTVMDLSTGKNIHETREWIIRNSPVPIGTVPIYQALEKVDGKAEELTWEMFRDTLVEQAEQGVDYFTIHAGVLLRYVPMTANRMTGIVSRGGSIMAKWCLAHHKESFLYTHFEEICEIMKAYDVAFSLGDGLRPGSIYDANDEAQLSELRTLGELTQVAWKHDVQVMIEGPGHVPMQLIKENMDIQLESCSEAPFYTLGPLTTDIAPGYDHITSGIGAAMIGWYGTAMLCYVTPKEHLGLPDKDDVKEGIITYKLAAHAADLAKGHPGAQIRDNALSKARFEFRWDDQFNLGLDPDKAKSFHDETLPKESAKVAHFCSMCGPHFCSMKITQDVREFAAKEGLNEADALARGMEVKAVEFVKQGAEVYRKV</sequence>
<gene>
    <name evidence="1" type="primary">thiC</name>
    <name type="ordered locus">Tbd_2694</name>
</gene>
<evidence type="ECO:0000255" key="1">
    <source>
        <dbReference type="HAMAP-Rule" id="MF_00089"/>
    </source>
</evidence>
<feature type="chain" id="PRO_0000242314" description="Phosphomethylpyrimidine synthase">
    <location>
        <begin position="1"/>
        <end position="652"/>
    </location>
</feature>
<feature type="binding site" evidence="1">
    <location>
        <position position="257"/>
    </location>
    <ligand>
        <name>substrate</name>
    </ligand>
</feature>
<feature type="binding site" evidence="1">
    <location>
        <position position="286"/>
    </location>
    <ligand>
        <name>substrate</name>
    </ligand>
</feature>
<feature type="binding site" evidence="1">
    <location>
        <position position="315"/>
    </location>
    <ligand>
        <name>substrate</name>
    </ligand>
</feature>
<feature type="binding site" evidence="1">
    <location>
        <position position="351"/>
    </location>
    <ligand>
        <name>substrate</name>
    </ligand>
</feature>
<feature type="binding site" evidence="1">
    <location>
        <begin position="371"/>
        <end position="373"/>
    </location>
    <ligand>
        <name>substrate</name>
    </ligand>
</feature>
<feature type="binding site" evidence="1">
    <location>
        <begin position="412"/>
        <end position="415"/>
    </location>
    <ligand>
        <name>substrate</name>
    </ligand>
</feature>
<feature type="binding site" evidence="1">
    <location>
        <position position="451"/>
    </location>
    <ligand>
        <name>substrate</name>
    </ligand>
</feature>
<feature type="binding site" evidence="1">
    <location>
        <position position="455"/>
    </location>
    <ligand>
        <name>Zn(2+)</name>
        <dbReference type="ChEBI" id="CHEBI:29105"/>
    </ligand>
</feature>
<feature type="binding site" evidence="1">
    <location>
        <position position="478"/>
    </location>
    <ligand>
        <name>substrate</name>
    </ligand>
</feature>
<feature type="binding site" evidence="1">
    <location>
        <position position="519"/>
    </location>
    <ligand>
        <name>Zn(2+)</name>
        <dbReference type="ChEBI" id="CHEBI:29105"/>
    </ligand>
</feature>
<feature type="binding site" evidence="1">
    <location>
        <position position="599"/>
    </location>
    <ligand>
        <name>[4Fe-4S] cluster</name>
        <dbReference type="ChEBI" id="CHEBI:49883"/>
        <note>4Fe-4S-S-AdoMet</note>
    </ligand>
</feature>
<feature type="binding site" evidence="1">
    <location>
        <position position="602"/>
    </location>
    <ligand>
        <name>[4Fe-4S] cluster</name>
        <dbReference type="ChEBI" id="CHEBI:49883"/>
        <note>4Fe-4S-S-AdoMet</note>
    </ligand>
</feature>
<feature type="binding site" evidence="1">
    <location>
        <position position="607"/>
    </location>
    <ligand>
        <name>[4Fe-4S] cluster</name>
        <dbReference type="ChEBI" id="CHEBI:49883"/>
        <note>4Fe-4S-S-AdoMet</note>
    </ligand>
</feature>